<accession>A6TH52</accession>
<reference key="1">
    <citation type="submission" date="2006-09" db="EMBL/GenBank/DDBJ databases">
        <authorList>
            <consortium name="The Klebsiella pneumonia Genome Sequencing Project"/>
            <person name="McClelland M."/>
            <person name="Sanderson E.K."/>
            <person name="Spieth J."/>
            <person name="Clifton W.S."/>
            <person name="Latreille P."/>
            <person name="Sabo A."/>
            <person name="Pepin K."/>
            <person name="Bhonagiri V."/>
            <person name="Porwollik S."/>
            <person name="Ali J."/>
            <person name="Wilson R.K."/>
        </authorList>
    </citation>
    <scope>NUCLEOTIDE SEQUENCE [LARGE SCALE GENOMIC DNA]</scope>
    <source>
        <strain>ATCC 700721 / MGH 78578</strain>
    </source>
</reference>
<evidence type="ECO:0000255" key="1">
    <source>
        <dbReference type="HAMAP-Rule" id="MF_00580"/>
    </source>
</evidence>
<protein>
    <recommendedName>
        <fullName evidence="1">Co-chaperonin GroES</fullName>
    </recommendedName>
    <alternativeName>
        <fullName evidence="1">10 kDa chaperonin</fullName>
    </alternativeName>
    <alternativeName>
        <fullName evidence="1">Chaperonin-10</fullName>
        <shortName evidence="1">Cpn10</shortName>
    </alternativeName>
</protein>
<keyword id="KW-0143">Chaperone</keyword>
<keyword id="KW-0963">Cytoplasm</keyword>
<proteinExistence type="inferred from homology"/>
<gene>
    <name evidence="1" type="primary">groES</name>
    <name evidence="1" type="synonym">groS</name>
    <name type="ordered locus">KPN78578_44620</name>
    <name type="ORF">KPN_04532</name>
</gene>
<feature type="chain" id="PRO_1000025279" description="Co-chaperonin GroES">
    <location>
        <begin position="1"/>
        <end position="97"/>
    </location>
</feature>
<dbReference type="EMBL" id="CP000647">
    <property type="protein sequence ID" value="ABR79886.1"/>
    <property type="molecule type" value="Genomic_DNA"/>
</dbReference>
<dbReference type="RefSeq" id="WP_015959281.1">
    <property type="nucleotide sequence ID" value="NC_009648.1"/>
</dbReference>
<dbReference type="SMR" id="A6TH52"/>
<dbReference type="STRING" id="272620.KPN_04532"/>
<dbReference type="jPOST" id="A6TH52"/>
<dbReference type="PaxDb" id="272620-KPN_04532"/>
<dbReference type="EnsemblBacteria" id="ABR79886">
    <property type="protein sequence ID" value="ABR79886"/>
    <property type="gene ID" value="KPN_04532"/>
</dbReference>
<dbReference type="KEGG" id="kpn:KPN_04532"/>
<dbReference type="HOGENOM" id="CLU_132825_1_1_6"/>
<dbReference type="Proteomes" id="UP000000265">
    <property type="component" value="Chromosome"/>
</dbReference>
<dbReference type="GO" id="GO:0005737">
    <property type="term" value="C:cytoplasm"/>
    <property type="evidence" value="ECO:0007669"/>
    <property type="project" value="UniProtKB-SubCell"/>
</dbReference>
<dbReference type="GO" id="GO:0005524">
    <property type="term" value="F:ATP binding"/>
    <property type="evidence" value="ECO:0007669"/>
    <property type="project" value="InterPro"/>
</dbReference>
<dbReference type="GO" id="GO:0046872">
    <property type="term" value="F:metal ion binding"/>
    <property type="evidence" value="ECO:0007669"/>
    <property type="project" value="TreeGrafter"/>
</dbReference>
<dbReference type="GO" id="GO:0044183">
    <property type="term" value="F:protein folding chaperone"/>
    <property type="evidence" value="ECO:0007669"/>
    <property type="project" value="InterPro"/>
</dbReference>
<dbReference type="GO" id="GO:0051087">
    <property type="term" value="F:protein-folding chaperone binding"/>
    <property type="evidence" value="ECO:0007669"/>
    <property type="project" value="TreeGrafter"/>
</dbReference>
<dbReference type="GO" id="GO:0051082">
    <property type="term" value="F:unfolded protein binding"/>
    <property type="evidence" value="ECO:0007669"/>
    <property type="project" value="TreeGrafter"/>
</dbReference>
<dbReference type="GO" id="GO:0051085">
    <property type="term" value="P:chaperone cofactor-dependent protein refolding"/>
    <property type="evidence" value="ECO:0007669"/>
    <property type="project" value="TreeGrafter"/>
</dbReference>
<dbReference type="CDD" id="cd00320">
    <property type="entry name" value="cpn10"/>
    <property type="match status" value="1"/>
</dbReference>
<dbReference type="FunFam" id="2.30.33.40:FF:000001">
    <property type="entry name" value="10 kDa chaperonin"/>
    <property type="match status" value="1"/>
</dbReference>
<dbReference type="Gene3D" id="2.30.33.40">
    <property type="entry name" value="GroES chaperonin"/>
    <property type="match status" value="1"/>
</dbReference>
<dbReference type="HAMAP" id="MF_00580">
    <property type="entry name" value="CH10"/>
    <property type="match status" value="1"/>
</dbReference>
<dbReference type="InterPro" id="IPR020818">
    <property type="entry name" value="Chaperonin_GroES"/>
</dbReference>
<dbReference type="InterPro" id="IPR037124">
    <property type="entry name" value="Chaperonin_GroES_sf"/>
</dbReference>
<dbReference type="InterPro" id="IPR018369">
    <property type="entry name" value="Chaprnonin_Cpn10_CS"/>
</dbReference>
<dbReference type="InterPro" id="IPR011032">
    <property type="entry name" value="GroES-like_sf"/>
</dbReference>
<dbReference type="NCBIfam" id="NF001526">
    <property type="entry name" value="PRK00364.1-1"/>
    <property type="match status" value="1"/>
</dbReference>
<dbReference type="NCBIfam" id="NF001527">
    <property type="entry name" value="PRK00364.1-2"/>
    <property type="match status" value="1"/>
</dbReference>
<dbReference type="PANTHER" id="PTHR10772">
    <property type="entry name" value="10 KDA HEAT SHOCK PROTEIN"/>
    <property type="match status" value="1"/>
</dbReference>
<dbReference type="PANTHER" id="PTHR10772:SF58">
    <property type="entry name" value="CO-CHAPERONIN GROES"/>
    <property type="match status" value="1"/>
</dbReference>
<dbReference type="Pfam" id="PF00166">
    <property type="entry name" value="Cpn10"/>
    <property type="match status" value="1"/>
</dbReference>
<dbReference type="PRINTS" id="PR00297">
    <property type="entry name" value="CHAPERONIN10"/>
</dbReference>
<dbReference type="SMART" id="SM00883">
    <property type="entry name" value="Cpn10"/>
    <property type="match status" value="1"/>
</dbReference>
<dbReference type="SUPFAM" id="SSF50129">
    <property type="entry name" value="GroES-like"/>
    <property type="match status" value="1"/>
</dbReference>
<dbReference type="PROSITE" id="PS00681">
    <property type="entry name" value="CHAPERONINS_CPN10"/>
    <property type="match status" value="1"/>
</dbReference>
<sequence>MSIRPLHDRVIVKRKEVETKSAGGIVLTGSAAAKSTRGEIIAVGKGRILENGTVQPLDVKVGDIVIFNDGYGVKTEKIDNEEVLIMPESDILAIVEA</sequence>
<organism>
    <name type="scientific">Klebsiella pneumoniae subsp. pneumoniae (strain ATCC 700721 / MGH 78578)</name>
    <dbReference type="NCBI Taxonomy" id="272620"/>
    <lineage>
        <taxon>Bacteria</taxon>
        <taxon>Pseudomonadati</taxon>
        <taxon>Pseudomonadota</taxon>
        <taxon>Gammaproteobacteria</taxon>
        <taxon>Enterobacterales</taxon>
        <taxon>Enterobacteriaceae</taxon>
        <taxon>Klebsiella/Raoultella group</taxon>
        <taxon>Klebsiella</taxon>
        <taxon>Klebsiella pneumoniae complex</taxon>
    </lineage>
</organism>
<name>CH10_KLEP7</name>
<comment type="function">
    <text evidence="1">Together with the chaperonin GroEL, plays an essential role in assisting protein folding. The GroEL-GroES system forms a nano-cage that allows encapsulation of the non-native substrate proteins and provides a physical environment optimized to promote and accelerate protein folding. GroES binds to the apical surface of the GroEL ring, thereby capping the opening of the GroEL channel.</text>
</comment>
<comment type="subunit">
    <text evidence="1">Heptamer of 7 subunits arranged in a ring. Interacts with the chaperonin GroEL.</text>
</comment>
<comment type="subcellular location">
    <subcellularLocation>
        <location evidence="1">Cytoplasm</location>
    </subcellularLocation>
</comment>
<comment type="similarity">
    <text evidence="1">Belongs to the GroES chaperonin family.</text>
</comment>